<feature type="chain" id="PRO_0000260334" description="Testin">
    <location>
        <begin position="1"/>
        <end position="421"/>
    </location>
</feature>
<feature type="domain" description="PET" evidence="3">
    <location>
        <begin position="92"/>
        <end position="199"/>
    </location>
</feature>
<feature type="domain" description="LIM zinc-binding 1" evidence="2">
    <location>
        <begin position="234"/>
        <end position="297"/>
    </location>
</feature>
<feature type="domain" description="LIM zinc-binding 2" evidence="2">
    <location>
        <begin position="299"/>
        <end position="359"/>
    </location>
</feature>
<feature type="domain" description="LIM zinc-binding 3" evidence="2">
    <location>
        <begin position="362"/>
        <end position="421"/>
    </location>
</feature>
<evidence type="ECO:0000250" key="1"/>
<evidence type="ECO:0000255" key="2">
    <source>
        <dbReference type="PROSITE-ProRule" id="PRU00125"/>
    </source>
</evidence>
<evidence type="ECO:0000255" key="3">
    <source>
        <dbReference type="PROSITE-ProRule" id="PRU00636"/>
    </source>
</evidence>
<evidence type="ECO:0000305" key="4"/>
<protein>
    <recommendedName>
        <fullName>Testin</fullName>
    </recommendedName>
</protein>
<name>TES_NOMLE</name>
<accession>Q07DY3</accession>
<reference key="1">
    <citation type="submission" date="2006-09" db="EMBL/GenBank/DDBJ databases">
        <title>NISC comparative sequencing initiative.</title>
        <authorList>
            <person name="Antonellis A."/>
            <person name="Ayele K."/>
            <person name="Benjamin B."/>
            <person name="Blakesley R.W."/>
            <person name="Boakye A."/>
            <person name="Bouffard G.G."/>
            <person name="Brinkley C."/>
            <person name="Brooks S."/>
            <person name="Chu G."/>
            <person name="Coleman H."/>
            <person name="Engle J."/>
            <person name="Gestole M."/>
            <person name="Greene A."/>
            <person name="Guan X."/>
            <person name="Gupta J."/>
            <person name="Haghighi P."/>
            <person name="Han J."/>
            <person name="Hansen N."/>
            <person name="Ho S.-L."/>
            <person name="Hu P."/>
            <person name="Hunter G."/>
            <person name="Hurle B."/>
            <person name="Idol J.R."/>
            <person name="Kwong P."/>
            <person name="Laric P."/>
            <person name="Larson S."/>
            <person name="Lee-Lin S.-Q."/>
            <person name="Legaspi R."/>
            <person name="Madden M."/>
            <person name="Maduro Q.L."/>
            <person name="Maduro V.B."/>
            <person name="Margulies E.H."/>
            <person name="Masiello C."/>
            <person name="Maskeri B."/>
            <person name="McDowell J."/>
            <person name="Mojidi H.A."/>
            <person name="Mullikin J.C."/>
            <person name="Oestreicher J.S."/>
            <person name="Park M."/>
            <person name="Portnoy M.E."/>
            <person name="Prasad A."/>
            <person name="Puri O."/>
            <person name="Reddix-Dugue N."/>
            <person name="Schandler K."/>
            <person name="Schueler M.G."/>
            <person name="Sison C."/>
            <person name="Stantripop S."/>
            <person name="Stephen E."/>
            <person name="Taye A."/>
            <person name="Thomas J.W."/>
            <person name="Thomas P.J."/>
            <person name="Tsipouri V."/>
            <person name="Ung L."/>
            <person name="Vogt J.L."/>
            <person name="Wetherby K.D."/>
            <person name="Young A."/>
            <person name="Green E.D."/>
        </authorList>
    </citation>
    <scope>NUCLEOTIDE SEQUENCE [LARGE SCALE GENOMIC DNA]</scope>
</reference>
<dbReference type="EMBL" id="DP000194">
    <property type="protein sequence ID" value="ABJ08859.1"/>
    <property type="molecule type" value="Genomic_DNA"/>
</dbReference>
<dbReference type="RefSeq" id="XP_003261272.1">
    <property type="nucleotide sequence ID" value="XM_003261224.4"/>
</dbReference>
<dbReference type="SMR" id="Q07DY3"/>
<dbReference type="FunCoup" id="Q07DY3">
    <property type="interactions" value="911"/>
</dbReference>
<dbReference type="STRING" id="61853.ENSNLEP00000044612"/>
<dbReference type="Ensembl" id="ENSNLET00000014695.3">
    <property type="protein sequence ID" value="ENSNLEP00000014008.1"/>
    <property type="gene ID" value="ENSNLEG00000011494.3"/>
</dbReference>
<dbReference type="GeneID" id="100594917"/>
<dbReference type="KEGG" id="nle:100594917"/>
<dbReference type="CTD" id="26136"/>
<dbReference type="eggNOG" id="KOG1704">
    <property type="taxonomic scope" value="Eukaryota"/>
</dbReference>
<dbReference type="GeneTree" id="ENSGT00940000155993"/>
<dbReference type="HOGENOM" id="CLU_008937_1_1_1"/>
<dbReference type="InParanoid" id="Q07DY3"/>
<dbReference type="OrthoDB" id="10069167at2759"/>
<dbReference type="TreeFam" id="TF313265"/>
<dbReference type="Proteomes" id="UP000001073">
    <property type="component" value="Chromosome 13"/>
</dbReference>
<dbReference type="GO" id="GO:0005737">
    <property type="term" value="C:cytoplasm"/>
    <property type="evidence" value="ECO:0000250"/>
    <property type="project" value="UniProtKB"/>
</dbReference>
<dbReference type="GO" id="GO:0005925">
    <property type="term" value="C:focal adhesion"/>
    <property type="evidence" value="ECO:0007669"/>
    <property type="project" value="UniProtKB-SubCell"/>
</dbReference>
<dbReference type="GO" id="GO:0008270">
    <property type="term" value="F:zinc ion binding"/>
    <property type="evidence" value="ECO:0000250"/>
    <property type="project" value="UniProtKB"/>
</dbReference>
<dbReference type="GO" id="GO:0008285">
    <property type="term" value="P:negative regulation of cell population proliferation"/>
    <property type="evidence" value="ECO:0000250"/>
    <property type="project" value="UniProtKB"/>
</dbReference>
<dbReference type="CDD" id="cd09413">
    <property type="entry name" value="LIM1_Testin"/>
    <property type="match status" value="1"/>
</dbReference>
<dbReference type="CDD" id="cd09416">
    <property type="entry name" value="LIM2_Testin"/>
    <property type="match status" value="1"/>
</dbReference>
<dbReference type="CDD" id="cd09419">
    <property type="entry name" value="LIM3_Testin"/>
    <property type="match status" value="1"/>
</dbReference>
<dbReference type="CDD" id="cd09829">
    <property type="entry name" value="PET_testin"/>
    <property type="match status" value="1"/>
</dbReference>
<dbReference type="FunFam" id="2.10.110.10:FF:000061">
    <property type="entry name" value="Testin"/>
    <property type="match status" value="1"/>
</dbReference>
<dbReference type="FunFam" id="2.10.110.10:FF:000065">
    <property type="entry name" value="Testin"/>
    <property type="match status" value="1"/>
</dbReference>
<dbReference type="FunFam" id="2.10.110.10:FF:000005">
    <property type="entry name" value="Testin isoform 1"/>
    <property type="match status" value="1"/>
</dbReference>
<dbReference type="Gene3D" id="2.10.110.10">
    <property type="entry name" value="Cysteine Rich Protein"/>
    <property type="match status" value="3"/>
</dbReference>
<dbReference type="InterPro" id="IPR034958">
    <property type="entry name" value="LIM1_Testin"/>
</dbReference>
<dbReference type="InterPro" id="IPR034959">
    <property type="entry name" value="LIM2_Testin"/>
</dbReference>
<dbReference type="InterPro" id="IPR034960">
    <property type="entry name" value="LIM3_Testin"/>
</dbReference>
<dbReference type="InterPro" id="IPR010442">
    <property type="entry name" value="PET_domain"/>
</dbReference>
<dbReference type="InterPro" id="IPR033724">
    <property type="entry name" value="PET_testin"/>
</dbReference>
<dbReference type="InterPro" id="IPR047120">
    <property type="entry name" value="Pk/Esn/Tes"/>
</dbReference>
<dbReference type="InterPro" id="IPR001781">
    <property type="entry name" value="Znf_LIM"/>
</dbReference>
<dbReference type="PANTHER" id="PTHR24211">
    <property type="entry name" value="LIM DOMAIN-CONTAINING PROTEIN"/>
    <property type="match status" value="1"/>
</dbReference>
<dbReference type="PANTHER" id="PTHR24211:SF1">
    <property type="entry name" value="TESTIN"/>
    <property type="match status" value="1"/>
</dbReference>
<dbReference type="Pfam" id="PF00412">
    <property type="entry name" value="LIM"/>
    <property type="match status" value="3"/>
</dbReference>
<dbReference type="Pfam" id="PF06297">
    <property type="entry name" value="PET"/>
    <property type="match status" value="1"/>
</dbReference>
<dbReference type="SMART" id="SM00132">
    <property type="entry name" value="LIM"/>
    <property type="match status" value="3"/>
</dbReference>
<dbReference type="SUPFAM" id="SSF57716">
    <property type="entry name" value="Glucocorticoid receptor-like (DNA-binding domain)"/>
    <property type="match status" value="2"/>
</dbReference>
<dbReference type="PROSITE" id="PS00478">
    <property type="entry name" value="LIM_DOMAIN_1"/>
    <property type="match status" value="2"/>
</dbReference>
<dbReference type="PROSITE" id="PS50023">
    <property type="entry name" value="LIM_DOMAIN_2"/>
    <property type="match status" value="3"/>
</dbReference>
<dbReference type="PROSITE" id="PS51303">
    <property type="entry name" value="PET"/>
    <property type="match status" value="1"/>
</dbReference>
<comment type="function">
    <text evidence="1">Scaffold protein that may play a role in cell adhesion, cell spreading and in the reorganization of the actin cytoskeleton. Plays a role in the regulation of cell proliferation. May act as a tumor suppressor (By similarity).</text>
</comment>
<comment type="subunit">
    <text evidence="1">Interacts via LIM domain 1 with ZYX. Interacts (via LIM domain 3) with ENAH and VASP. Interacts with ALKBH4, talin, actin, alpha-actinin, GRIP1 and PXN (By similarity). Interacts (via LIM domain 2) with ACTL7A (via N-terminus). Heterodimer with ACTL7A; the heterodimer interacts with ENAH to form a heterotrimer (By similarity).</text>
</comment>
<comment type="subcellular location">
    <subcellularLocation>
        <location evidence="1">Cytoplasm</location>
    </subcellularLocation>
    <subcellularLocation>
        <location evidence="1">Cell junction</location>
        <location evidence="1">Focal adhesion</location>
    </subcellularLocation>
    <text evidence="1">Detected along actin stress fibers.</text>
</comment>
<comment type="domain">
    <text evidence="1">The N-terminal and the C-terminal halves of the protein can associate with each other, thereby hindering interactions with ZYX.</text>
</comment>
<comment type="similarity">
    <text evidence="4">Belongs to the prickle / espinas / testin family.</text>
</comment>
<gene>
    <name type="primary">TES</name>
</gene>
<sequence length="421" mass="48024">MDLENKVKKMGLGHEQGFGAPCLKCKEKCEGFELHFWRKICRNCKCGQEEHDVLLSNEEDRKVGKLFEDTKYTTLIAKLKSDGIPMYKRNVMILTNPVAAKKNVSINTVTYEWAPPVQNQALARQYMQMLPKEKQPVAGSEGAQYRKKQLAKQLPAHDQDPSKCHELSPREVNEMEQFVKKYKSEALGVGDVKLPCEMDAQVPKQMNIPGGDRSTPAAVGAMEDKSAEHKRTQYSCYCCKLSMKEGDPAIYAERAGYDKLWHPACFVCSTCHELLVDMIYFWKNEKLYCGRHYCDSEKPRCAGCDELIFSNEYTQAENQNWHLKHFCCFDCDSILAGEIYVMVNDKPVCKPCYVKNHAVVCQGCHNAIDPEVQRVTYNNFSWHASTECFLCSCCSKCLIGQKFMPVEGMVFCSVECKKRMS</sequence>
<organism>
    <name type="scientific">Nomascus leucogenys</name>
    <name type="common">Northern white-cheeked gibbon</name>
    <name type="synonym">Hylobates leucogenys</name>
    <dbReference type="NCBI Taxonomy" id="61853"/>
    <lineage>
        <taxon>Eukaryota</taxon>
        <taxon>Metazoa</taxon>
        <taxon>Chordata</taxon>
        <taxon>Craniata</taxon>
        <taxon>Vertebrata</taxon>
        <taxon>Euteleostomi</taxon>
        <taxon>Mammalia</taxon>
        <taxon>Eutheria</taxon>
        <taxon>Euarchontoglires</taxon>
        <taxon>Primates</taxon>
        <taxon>Haplorrhini</taxon>
        <taxon>Catarrhini</taxon>
        <taxon>Hylobatidae</taxon>
        <taxon>Nomascus</taxon>
    </lineage>
</organism>
<proteinExistence type="inferred from homology"/>
<keyword id="KW-0965">Cell junction</keyword>
<keyword id="KW-0963">Cytoplasm</keyword>
<keyword id="KW-0440">LIM domain</keyword>
<keyword id="KW-0479">Metal-binding</keyword>
<keyword id="KW-1185">Reference proteome</keyword>
<keyword id="KW-0677">Repeat</keyword>
<keyword id="KW-0862">Zinc</keyword>